<accession>P71047</accession>
<reference key="1">
    <citation type="journal article" date="1997" name="Microbiology">
        <title>The Bacillus subtilis genome from gerBC (311 degrees) to licR (334 degrees).</title>
        <authorList>
            <person name="Presecan E."/>
            <person name="Moszer I."/>
            <person name="Boursier L."/>
            <person name="Cruz Ramos H."/>
            <person name="De La Fuente V."/>
            <person name="Hullo M.-F."/>
            <person name="Lelong C."/>
            <person name="Schleich S."/>
            <person name="Sekowska A."/>
            <person name="Song B.H."/>
            <person name="Villani G."/>
            <person name="Kunst F."/>
            <person name="Danchin A."/>
            <person name="Glaser P."/>
        </authorList>
    </citation>
    <scope>NUCLEOTIDE SEQUENCE [GENOMIC DNA]</scope>
    <source>
        <strain>168</strain>
    </source>
</reference>
<reference key="2">
    <citation type="journal article" date="1997" name="Nature">
        <title>The complete genome sequence of the Gram-positive bacterium Bacillus subtilis.</title>
        <authorList>
            <person name="Kunst F."/>
            <person name="Ogasawara N."/>
            <person name="Moszer I."/>
            <person name="Albertini A.M."/>
            <person name="Alloni G."/>
            <person name="Azevedo V."/>
            <person name="Bertero M.G."/>
            <person name="Bessieres P."/>
            <person name="Bolotin A."/>
            <person name="Borchert S."/>
            <person name="Borriss R."/>
            <person name="Boursier L."/>
            <person name="Brans A."/>
            <person name="Braun M."/>
            <person name="Brignell S.C."/>
            <person name="Bron S."/>
            <person name="Brouillet S."/>
            <person name="Bruschi C.V."/>
            <person name="Caldwell B."/>
            <person name="Capuano V."/>
            <person name="Carter N.M."/>
            <person name="Choi S.-K."/>
            <person name="Codani J.-J."/>
            <person name="Connerton I.F."/>
            <person name="Cummings N.J."/>
            <person name="Daniel R.A."/>
            <person name="Denizot F."/>
            <person name="Devine K.M."/>
            <person name="Duesterhoeft A."/>
            <person name="Ehrlich S.D."/>
            <person name="Emmerson P.T."/>
            <person name="Entian K.-D."/>
            <person name="Errington J."/>
            <person name="Fabret C."/>
            <person name="Ferrari E."/>
            <person name="Foulger D."/>
            <person name="Fritz C."/>
            <person name="Fujita M."/>
            <person name="Fujita Y."/>
            <person name="Fuma S."/>
            <person name="Galizzi A."/>
            <person name="Galleron N."/>
            <person name="Ghim S.-Y."/>
            <person name="Glaser P."/>
            <person name="Goffeau A."/>
            <person name="Golightly E.J."/>
            <person name="Grandi G."/>
            <person name="Guiseppi G."/>
            <person name="Guy B.J."/>
            <person name="Haga K."/>
            <person name="Haiech J."/>
            <person name="Harwood C.R."/>
            <person name="Henaut A."/>
            <person name="Hilbert H."/>
            <person name="Holsappel S."/>
            <person name="Hosono S."/>
            <person name="Hullo M.-F."/>
            <person name="Itaya M."/>
            <person name="Jones L.-M."/>
            <person name="Joris B."/>
            <person name="Karamata D."/>
            <person name="Kasahara Y."/>
            <person name="Klaerr-Blanchard M."/>
            <person name="Klein C."/>
            <person name="Kobayashi Y."/>
            <person name="Koetter P."/>
            <person name="Koningstein G."/>
            <person name="Krogh S."/>
            <person name="Kumano M."/>
            <person name="Kurita K."/>
            <person name="Lapidus A."/>
            <person name="Lardinois S."/>
            <person name="Lauber J."/>
            <person name="Lazarevic V."/>
            <person name="Lee S.-M."/>
            <person name="Levine A."/>
            <person name="Liu H."/>
            <person name="Masuda S."/>
            <person name="Mauel C."/>
            <person name="Medigue C."/>
            <person name="Medina N."/>
            <person name="Mellado R.P."/>
            <person name="Mizuno M."/>
            <person name="Moestl D."/>
            <person name="Nakai S."/>
            <person name="Noback M."/>
            <person name="Noone D."/>
            <person name="O'Reilly M."/>
            <person name="Ogawa K."/>
            <person name="Ogiwara A."/>
            <person name="Oudega B."/>
            <person name="Park S.-H."/>
            <person name="Parro V."/>
            <person name="Pohl T.M."/>
            <person name="Portetelle D."/>
            <person name="Porwollik S."/>
            <person name="Prescott A.M."/>
            <person name="Presecan E."/>
            <person name="Pujic P."/>
            <person name="Purnelle B."/>
            <person name="Rapoport G."/>
            <person name="Rey M."/>
            <person name="Reynolds S."/>
            <person name="Rieger M."/>
            <person name="Rivolta C."/>
            <person name="Rocha E."/>
            <person name="Roche B."/>
            <person name="Rose M."/>
            <person name="Sadaie Y."/>
            <person name="Sato T."/>
            <person name="Scanlan E."/>
            <person name="Schleich S."/>
            <person name="Schroeter R."/>
            <person name="Scoffone F."/>
            <person name="Sekiguchi J."/>
            <person name="Sekowska A."/>
            <person name="Seror S.J."/>
            <person name="Serror P."/>
            <person name="Shin B.-S."/>
            <person name="Soldo B."/>
            <person name="Sorokin A."/>
            <person name="Tacconi E."/>
            <person name="Takagi T."/>
            <person name="Takahashi H."/>
            <person name="Takemaru K."/>
            <person name="Takeuchi M."/>
            <person name="Tamakoshi A."/>
            <person name="Tanaka T."/>
            <person name="Terpstra P."/>
            <person name="Tognoni A."/>
            <person name="Tosato V."/>
            <person name="Uchiyama S."/>
            <person name="Vandenbol M."/>
            <person name="Vannier F."/>
            <person name="Vassarotti A."/>
            <person name="Viari A."/>
            <person name="Wambutt R."/>
            <person name="Wedler E."/>
            <person name="Wedler H."/>
            <person name="Weitzenegger T."/>
            <person name="Winters P."/>
            <person name="Wipat A."/>
            <person name="Yamamoto H."/>
            <person name="Yamane K."/>
            <person name="Yasumoto K."/>
            <person name="Yata K."/>
            <person name="Yoshida K."/>
            <person name="Yoshikawa H.-F."/>
            <person name="Zumstein E."/>
            <person name="Yoshikawa H."/>
            <person name="Danchin A."/>
        </authorList>
    </citation>
    <scope>NUCLEOTIDE SEQUENCE [LARGE SCALE GENOMIC DNA]</scope>
    <source>
        <strain>168</strain>
    </source>
</reference>
<organism>
    <name type="scientific">Bacillus subtilis (strain 168)</name>
    <dbReference type="NCBI Taxonomy" id="224308"/>
    <lineage>
        <taxon>Bacteria</taxon>
        <taxon>Bacillati</taxon>
        <taxon>Bacillota</taxon>
        <taxon>Bacilli</taxon>
        <taxon>Bacillales</taxon>
        <taxon>Bacillaceae</taxon>
        <taxon>Bacillus</taxon>
    </lineage>
</organism>
<dbReference type="EMBL" id="Z80355">
    <property type="protein sequence ID" value="CAB02493.1"/>
    <property type="molecule type" value="Genomic_DNA"/>
</dbReference>
<dbReference type="EMBL" id="AL009126">
    <property type="protein sequence ID" value="CAB15785.1"/>
    <property type="molecule type" value="Genomic_DNA"/>
</dbReference>
<dbReference type="PIR" id="A70057">
    <property type="entry name" value="A70057"/>
</dbReference>
<dbReference type="RefSeq" id="NP_391638.1">
    <property type="nucleotide sequence ID" value="NC_000964.3"/>
</dbReference>
<dbReference type="RefSeq" id="WP_003243988.1">
    <property type="nucleotide sequence ID" value="NZ_OZ025638.1"/>
</dbReference>
<dbReference type="SMR" id="P71047"/>
<dbReference type="FunCoup" id="P71047">
    <property type="interactions" value="248"/>
</dbReference>
<dbReference type="STRING" id="224308.BSU37580"/>
<dbReference type="PaxDb" id="224308-BSU37580"/>
<dbReference type="EnsemblBacteria" id="CAB15785">
    <property type="protein sequence ID" value="CAB15785"/>
    <property type="gene ID" value="BSU_37580"/>
</dbReference>
<dbReference type="GeneID" id="937074"/>
<dbReference type="KEGG" id="bsu:BSU37580"/>
<dbReference type="PATRIC" id="fig|224308.179.peg.4070"/>
<dbReference type="eggNOG" id="COG1959">
    <property type="taxonomic scope" value="Bacteria"/>
</dbReference>
<dbReference type="InParanoid" id="P71047"/>
<dbReference type="OrthoDB" id="9808360at2"/>
<dbReference type="PhylomeDB" id="P71047"/>
<dbReference type="BioCyc" id="BSUB:BSU37580-MONOMER"/>
<dbReference type="Proteomes" id="UP000001570">
    <property type="component" value="Chromosome"/>
</dbReference>
<dbReference type="GO" id="GO:0005829">
    <property type="term" value="C:cytosol"/>
    <property type="evidence" value="ECO:0000318"/>
    <property type="project" value="GO_Central"/>
</dbReference>
<dbReference type="GO" id="GO:0003677">
    <property type="term" value="F:DNA binding"/>
    <property type="evidence" value="ECO:0007669"/>
    <property type="project" value="UniProtKB-KW"/>
</dbReference>
<dbReference type="GO" id="GO:0003700">
    <property type="term" value="F:DNA-binding transcription factor activity"/>
    <property type="evidence" value="ECO:0000318"/>
    <property type="project" value="GO_Central"/>
</dbReference>
<dbReference type="GO" id="GO:0006355">
    <property type="term" value="P:regulation of DNA-templated transcription"/>
    <property type="evidence" value="ECO:0000318"/>
    <property type="project" value="GO_Central"/>
</dbReference>
<dbReference type="Gene3D" id="1.10.10.10">
    <property type="entry name" value="Winged helix-like DNA-binding domain superfamily/Winged helix DNA-binding domain"/>
    <property type="match status" value="1"/>
</dbReference>
<dbReference type="InterPro" id="IPR030489">
    <property type="entry name" value="TR_Rrf2-type_CS"/>
</dbReference>
<dbReference type="InterPro" id="IPR000944">
    <property type="entry name" value="Tscrpt_reg_Rrf2"/>
</dbReference>
<dbReference type="InterPro" id="IPR036388">
    <property type="entry name" value="WH-like_DNA-bd_sf"/>
</dbReference>
<dbReference type="InterPro" id="IPR036390">
    <property type="entry name" value="WH_DNA-bd_sf"/>
</dbReference>
<dbReference type="NCBIfam" id="TIGR00738">
    <property type="entry name" value="rrf2_super"/>
    <property type="match status" value="1"/>
</dbReference>
<dbReference type="PANTHER" id="PTHR33221:SF15">
    <property type="entry name" value="HTH-TYPE TRANSCRIPTIONAL REGULATOR YWGB-RELATED"/>
    <property type="match status" value="1"/>
</dbReference>
<dbReference type="PANTHER" id="PTHR33221">
    <property type="entry name" value="WINGED HELIX-TURN-HELIX TRANSCRIPTIONAL REGULATOR, RRF2 FAMILY"/>
    <property type="match status" value="1"/>
</dbReference>
<dbReference type="Pfam" id="PF02082">
    <property type="entry name" value="Rrf2"/>
    <property type="match status" value="1"/>
</dbReference>
<dbReference type="SUPFAM" id="SSF46785">
    <property type="entry name" value="Winged helix' DNA-binding domain"/>
    <property type="match status" value="1"/>
</dbReference>
<dbReference type="PROSITE" id="PS01332">
    <property type="entry name" value="HTH_RRF2_1"/>
    <property type="match status" value="1"/>
</dbReference>
<dbReference type="PROSITE" id="PS51197">
    <property type="entry name" value="HTH_RRF2_2"/>
    <property type="match status" value="1"/>
</dbReference>
<sequence length="156" mass="17435">MKMKSGMEQAVSVLLLLSRLPVQASLTSEAISQRLRVSPSYLKKLMRTLVQAGLAESLPGTKGGFTLTKPLADITLYDVYQAVEGRGSMYQGKGLLQSVFEGESHCVLETVMAEIEDKWSNLMREESLQHVMDRVGELYDLEKIDDWVIKQVKGQL</sequence>
<evidence type="ECO:0000255" key="1">
    <source>
        <dbReference type="PROSITE-ProRule" id="PRU00540"/>
    </source>
</evidence>
<protein>
    <recommendedName>
        <fullName>Putative HTH-type transcriptional regulator YwgB</fullName>
    </recommendedName>
</protein>
<gene>
    <name type="primary">ywgB</name>
    <name type="ordered locus">BSU37580</name>
</gene>
<feature type="chain" id="PRO_0000036204" description="Putative HTH-type transcriptional regulator YwgB">
    <location>
        <begin position="1"/>
        <end position="156"/>
    </location>
</feature>
<feature type="domain" description="HTH rrf2-type" evidence="1">
    <location>
        <begin position="2"/>
        <end position="133"/>
    </location>
</feature>
<name>YWGB_BACSU</name>
<proteinExistence type="predicted"/>
<keyword id="KW-0238">DNA-binding</keyword>
<keyword id="KW-1185">Reference proteome</keyword>